<keyword id="KW-0150">Chloroplast</keyword>
<keyword id="KW-0934">Plastid</keyword>
<keyword id="KW-0687">Ribonucleoprotein</keyword>
<keyword id="KW-0689">Ribosomal protein</keyword>
<dbReference type="EMBL" id="AB001684">
    <property type="protein sequence ID" value="BAA58009.1"/>
    <property type="molecule type" value="Genomic_DNA"/>
</dbReference>
<dbReference type="PIR" id="T07361">
    <property type="entry name" value="T07361"/>
</dbReference>
<dbReference type="RefSeq" id="NP_045933.1">
    <property type="nucleotide sequence ID" value="NC_001865.1"/>
</dbReference>
<dbReference type="SMR" id="P56367"/>
<dbReference type="GeneID" id="809150"/>
<dbReference type="GO" id="GO:0009507">
    <property type="term" value="C:chloroplast"/>
    <property type="evidence" value="ECO:0007669"/>
    <property type="project" value="UniProtKB-SubCell"/>
</dbReference>
<dbReference type="GO" id="GO:0005762">
    <property type="term" value="C:mitochondrial large ribosomal subunit"/>
    <property type="evidence" value="ECO:0007669"/>
    <property type="project" value="TreeGrafter"/>
</dbReference>
<dbReference type="GO" id="GO:0019843">
    <property type="term" value="F:rRNA binding"/>
    <property type="evidence" value="ECO:0007669"/>
    <property type="project" value="UniProtKB-UniRule"/>
</dbReference>
<dbReference type="GO" id="GO:0003735">
    <property type="term" value="F:structural constituent of ribosome"/>
    <property type="evidence" value="ECO:0007669"/>
    <property type="project" value="InterPro"/>
</dbReference>
<dbReference type="GO" id="GO:0016740">
    <property type="term" value="F:transferase activity"/>
    <property type="evidence" value="ECO:0007669"/>
    <property type="project" value="InterPro"/>
</dbReference>
<dbReference type="GO" id="GO:0032543">
    <property type="term" value="P:mitochondrial translation"/>
    <property type="evidence" value="ECO:0007669"/>
    <property type="project" value="TreeGrafter"/>
</dbReference>
<dbReference type="FunFam" id="2.30.30.30:FF:000001">
    <property type="entry name" value="50S ribosomal protein L2"/>
    <property type="match status" value="1"/>
</dbReference>
<dbReference type="FunFam" id="2.40.50.140:FF:000003">
    <property type="entry name" value="50S ribosomal protein L2"/>
    <property type="match status" value="1"/>
</dbReference>
<dbReference type="FunFam" id="4.10.950.10:FF:000001">
    <property type="entry name" value="50S ribosomal protein L2"/>
    <property type="match status" value="1"/>
</dbReference>
<dbReference type="Gene3D" id="2.30.30.30">
    <property type="match status" value="1"/>
</dbReference>
<dbReference type="Gene3D" id="2.40.50.140">
    <property type="entry name" value="Nucleic acid-binding proteins"/>
    <property type="match status" value="1"/>
</dbReference>
<dbReference type="Gene3D" id="4.10.950.10">
    <property type="entry name" value="Ribosomal protein L2, domain 3"/>
    <property type="match status" value="1"/>
</dbReference>
<dbReference type="HAMAP" id="MF_01320_B">
    <property type="entry name" value="Ribosomal_uL2_B"/>
    <property type="match status" value="1"/>
</dbReference>
<dbReference type="InterPro" id="IPR012340">
    <property type="entry name" value="NA-bd_OB-fold"/>
</dbReference>
<dbReference type="InterPro" id="IPR014722">
    <property type="entry name" value="Rib_uL2_dom2"/>
</dbReference>
<dbReference type="InterPro" id="IPR002171">
    <property type="entry name" value="Ribosomal_uL2"/>
</dbReference>
<dbReference type="InterPro" id="IPR005880">
    <property type="entry name" value="Ribosomal_uL2_bac/org-type"/>
</dbReference>
<dbReference type="InterPro" id="IPR022669">
    <property type="entry name" value="Ribosomal_uL2_C"/>
</dbReference>
<dbReference type="InterPro" id="IPR022671">
    <property type="entry name" value="Ribosomal_uL2_CS"/>
</dbReference>
<dbReference type="InterPro" id="IPR014726">
    <property type="entry name" value="Ribosomal_uL2_dom3"/>
</dbReference>
<dbReference type="InterPro" id="IPR022666">
    <property type="entry name" value="Ribosomal_uL2_RNA-bd_dom"/>
</dbReference>
<dbReference type="InterPro" id="IPR008991">
    <property type="entry name" value="Translation_prot_SH3-like_sf"/>
</dbReference>
<dbReference type="NCBIfam" id="TIGR01171">
    <property type="entry name" value="rplB_bact"/>
    <property type="match status" value="1"/>
</dbReference>
<dbReference type="PANTHER" id="PTHR13691:SF5">
    <property type="entry name" value="LARGE RIBOSOMAL SUBUNIT PROTEIN UL2M"/>
    <property type="match status" value="1"/>
</dbReference>
<dbReference type="PANTHER" id="PTHR13691">
    <property type="entry name" value="RIBOSOMAL PROTEIN L2"/>
    <property type="match status" value="1"/>
</dbReference>
<dbReference type="Pfam" id="PF00181">
    <property type="entry name" value="Ribosomal_L2"/>
    <property type="match status" value="1"/>
</dbReference>
<dbReference type="Pfam" id="PF03947">
    <property type="entry name" value="Ribosomal_L2_C"/>
    <property type="match status" value="1"/>
</dbReference>
<dbReference type="PIRSF" id="PIRSF002158">
    <property type="entry name" value="Ribosomal_L2"/>
    <property type="match status" value="1"/>
</dbReference>
<dbReference type="SMART" id="SM01383">
    <property type="entry name" value="Ribosomal_L2"/>
    <property type="match status" value="1"/>
</dbReference>
<dbReference type="SMART" id="SM01382">
    <property type="entry name" value="Ribosomal_L2_C"/>
    <property type="match status" value="1"/>
</dbReference>
<dbReference type="SUPFAM" id="SSF50249">
    <property type="entry name" value="Nucleic acid-binding proteins"/>
    <property type="match status" value="1"/>
</dbReference>
<dbReference type="SUPFAM" id="SSF50104">
    <property type="entry name" value="Translation proteins SH3-like domain"/>
    <property type="match status" value="1"/>
</dbReference>
<dbReference type="PROSITE" id="PS00467">
    <property type="entry name" value="RIBOSOMAL_L2"/>
    <property type="match status" value="1"/>
</dbReference>
<name>RK2_CHLVU</name>
<protein>
    <recommendedName>
        <fullName evidence="2">Large ribosomal subunit protein uL2c</fullName>
    </recommendedName>
    <alternativeName>
        <fullName evidence="4">50S ribosomal protein L2, chloroplastic</fullName>
    </alternativeName>
</protein>
<reference key="1">
    <citation type="journal article" date="1997" name="Proc. Natl. Acad. Sci. U.S.A.">
        <title>Complete nucleotide sequence of the chloroplast genome from the green alga Chlorella vulgaris: the existence of genes possibly involved in chloroplast division.</title>
        <authorList>
            <person name="Wakasugi T."/>
            <person name="Nagai T."/>
            <person name="Kapoor M."/>
            <person name="Sugita M."/>
            <person name="Ito M."/>
            <person name="Ito S."/>
            <person name="Tsudzuki J."/>
            <person name="Nakashima K."/>
            <person name="Tsudzuki T."/>
            <person name="Suzuki Y."/>
            <person name="Hamada A."/>
            <person name="Ohta T."/>
            <person name="Inamura A."/>
            <person name="Yoshinaga K."/>
            <person name="Sugiura M."/>
        </authorList>
    </citation>
    <scope>NUCLEOTIDE SEQUENCE [LARGE SCALE GENOMIC DNA]</scope>
    <source>
        <strain>IAM C-27 / Tamiya</strain>
    </source>
</reference>
<sequence length="275" mass="30093">MAIRFFKAATPGTRHGSVLDFSEITHKKPEKALTSWWSRSKGRNNRGIITSRHRGGGHKRLYREIDFARAKVNVPAKVAYIEYDPNRNARIALVNYQDGEKKYILHPVGLQVGQTIIASPEASIAIGNCLPLVKIPLGTEVHNIELQPGSGGQLVRAAGTVAQIVAKEGTWASLRLPSGEVRLVSQNCWATIGRVGNIDAFNLTLGKAGRSRWLGRRPHVRGSAMNPVDHPHGGGEGRAPIGRARPVSPWGRPALGAKTRKRKKFSAALILQRRK</sequence>
<organism>
    <name type="scientific">Chlorella vulgaris</name>
    <name type="common">Green alga</name>
    <dbReference type="NCBI Taxonomy" id="3077"/>
    <lineage>
        <taxon>Eukaryota</taxon>
        <taxon>Viridiplantae</taxon>
        <taxon>Chlorophyta</taxon>
        <taxon>core chlorophytes</taxon>
        <taxon>Trebouxiophyceae</taxon>
        <taxon>Chlorellales</taxon>
        <taxon>Chlorellaceae</taxon>
        <taxon>Chlorella clade</taxon>
        <taxon>Chlorella</taxon>
    </lineage>
</organism>
<evidence type="ECO:0000250" key="1"/>
<evidence type="ECO:0000255" key="2">
    <source>
        <dbReference type="HAMAP-Rule" id="MF_01320"/>
    </source>
</evidence>
<evidence type="ECO:0000256" key="3">
    <source>
        <dbReference type="SAM" id="MobiDB-lite"/>
    </source>
</evidence>
<evidence type="ECO:0000305" key="4"/>
<gene>
    <name type="primary">rpl2</name>
</gene>
<feature type="chain" id="PRO_0000129671" description="Large ribosomal subunit protein uL2c">
    <location>
        <begin position="1"/>
        <end position="275"/>
    </location>
</feature>
<feature type="region of interest" description="Disordered" evidence="3">
    <location>
        <begin position="222"/>
        <end position="258"/>
    </location>
</feature>
<geneLocation type="chloroplast"/>
<proteinExistence type="inferred from homology"/>
<accession>P56367</accession>
<comment type="subunit">
    <text evidence="1">Part of the 50S ribosomal subunit.</text>
</comment>
<comment type="subcellular location">
    <subcellularLocation>
        <location>Plastid</location>
        <location>Chloroplast</location>
    </subcellularLocation>
</comment>
<comment type="similarity">
    <text evidence="4">Belongs to the universal ribosomal protein uL2 family.</text>
</comment>